<evidence type="ECO:0000250" key="1">
    <source>
        <dbReference type="UniProtKB" id="Q9NS62"/>
    </source>
</evidence>
<evidence type="ECO:0000255" key="2"/>
<evidence type="ECO:0000255" key="3">
    <source>
        <dbReference type="PROSITE-ProRule" id="PRU00210"/>
    </source>
</evidence>
<evidence type="ECO:0000256" key="4">
    <source>
        <dbReference type="SAM" id="MobiDB-lite"/>
    </source>
</evidence>
<evidence type="ECO:0000269" key="5">
    <source>
    </source>
</evidence>
<evidence type="ECO:0000305" key="6"/>
<evidence type="ECO:0007744" key="7">
    <source>
    </source>
</evidence>
<comment type="function">
    <text evidence="1">Is a positive regulator of nascent focal adhesion assembly, involved in the modulation of endothelial cell attachment to the extracellular matrix.</text>
</comment>
<comment type="subunit">
    <text evidence="1">Part of a complex composed of THSD1, PTK2/FAK1, TLN1 and VCL. Interacts with TLN1.</text>
</comment>
<comment type="subcellular location">
    <subcellularLocation>
        <location evidence="1">Endosome membrane</location>
        <topology evidence="6">Single-pass type I membrane protein</topology>
    </subcellularLocation>
    <subcellularLocation>
        <location evidence="1">Cell junction</location>
        <location evidence="1">Focal adhesion</location>
    </subcellularLocation>
    <text evidence="1">Localizes to nascent focal adhesions.</text>
</comment>
<comment type="tissue specificity">
    <text evidence="5">Expressed in cerebral vascular endothelium.</text>
</comment>
<comment type="disruption phenotype">
    <text evidence="5">Some animals develop hydrocephalus as early as 8 weeks after birth. A few die spontaneously at 9 weeks and have diffuse cerebral hemorrhage not seen in wild-type littermates.</text>
</comment>
<comment type="sequence caution" evidence="6">
    <conflict type="frameshift">
        <sequence resource="EMBL-CDS" id="BAC33850"/>
    </conflict>
</comment>
<gene>
    <name type="primary">Thsd1</name>
    <name type="synonym">Tmtsp</name>
</gene>
<feature type="signal peptide" evidence="2">
    <location>
        <begin position="1"/>
        <end position="24"/>
    </location>
</feature>
<feature type="chain" id="PRO_0000249585" description="Thrombospondin type-1 domain-containing protein 1">
    <location>
        <begin position="25"/>
        <end position="851"/>
    </location>
</feature>
<feature type="topological domain" description="Extracellular" evidence="2">
    <location>
        <begin position="25"/>
        <end position="412"/>
    </location>
</feature>
<feature type="transmembrane region" description="Helical" evidence="2">
    <location>
        <begin position="413"/>
        <end position="433"/>
    </location>
</feature>
<feature type="topological domain" description="Cytoplasmic" evidence="2">
    <location>
        <begin position="434"/>
        <end position="851"/>
    </location>
</feature>
<feature type="domain" description="TSP type-1" evidence="3">
    <location>
        <begin position="339"/>
        <end position="392"/>
    </location>
</feature>
<feature type="region of interest" description="Disordered" evidence="4">
    <location>
        <begin position="471"/>
        <end position="516"/>
    </location>
</feature>
<feature type="region of interest" description="Disordered" evidence="4">
    <location>
        <begin position="626"/>
        <end position="646"/>
    </location>
</feature>
<feature type="region of interest" description="Disordered" evidence="4">
    <location>
        <begin position="682"/>
        <end position="777"/>
    </location>
</feature>
<feature type="compositionally biased region" description="Basic and acidic residues" evidence="4">
    <location>
        <begin position="685"/>
        <end position="695"/>
    </location>
</feature>
<feature type="compositionally biased region" description="Polar residues" evidence="4">
    <location>
        <begin position="765"/>
        <end position="776"/>
    </location>
</feature>
<feature type="modified residue" description="Phosphoserine" evidence="7">
    <location>
        <position position="462"/>
    </location>
</feature>
<feature type="glycosylation site" description="N-linked (GlcNAc...) asparagine" evidence="2">
    <location>
        <position position="53"/>
    </location>
</feature>
<feature type="glycosylation site" description="N-linked (GlcNAc...) asparagine" evidence="2">
    <location>
        <position position="58"/>
    </location>
</feature>
<feature type="glycosylation site" description="N-linked (GlcNAc...) asparagine" evidence="2">
    <location>
        <position position="69"/>
    </location>
</feature>
<feature type="glycosylation site" description="N-linked (GlcNAc...) asparagine" evidence="2">
    <location>
        <position position="110"/>
    </location>
</feature>
<feature type="glycosylation site" description="N-linked (GlcNAc...) asparagine" evidence="2">
    <location>
        <position position="135"/>
    </location>
</feature>
<feature type="glycosylation site" description="N-linked (GlcNAc...) asparagine" evidence="2">
    <location>
        <position position="304"/>
    </location>
</feature>
<feature type="disulfide bond" evidence="3">
    <location>
        <begin position="351"/>
        <end position="386"/>
    </location>
</feature>
<feature type="disulfide bond" evidence="3">
    <location>
        <begin position="355"/>
        <end position="391"/>
    </location>
</feature>
<feature type="disulfide bond" evidence="3">
    <location>
        <begin position="366"/>
        <end position="376"/>
    </location>
</feature>
<feature type="sequence conflict" description="In Ref. 1; BAA92685 and 3; AAI19604." evidence="6" ref="1 3">
    <original>Q</original>
    <variation>R</variation>
    <location>
        <position position="625"/>
    </location>
</feature>
<accession>Q9JM61</accession>
<accession>Q8C7Q9</accession>
<proteinExistence type="evidence at protein level"/>
<dbReference type="EMBL" id="AB039946">
    <property type="protein sequence ID" value="BAA92685.1"/>
    <property type="molecule type" value="mRNA"/>
</dbReference>
<dbReference type="EMBL" id="AK049636">
    <property type="protein sequence ID" value="BAC33850.1"/>
    <property type="status" value="ALT_FRAME"/>
    <property type="molecule type" value="mRNA"/>
</dbReference>
<dbReference type="EMBL" id="BC119603">
    <property type="protein sequence ID" value="AAI19604.1"/>
    <property type="molecule type" value="mRNA"/>
</dbReference>
<dbReference type="CCDS" id="CCDS22172.1"/>
<dbReference type="RefSeq" id="NP_062522.1">
    <property type="nucleotide sequence ID" value="NM_019576.2"/>
</dbReference>
<dbReference type="RefSeq" id="XP_006509236.1">
    <property type="nucleotide sequence ID" value="XM_006509173.3"/>
</dbReference>
<dbReference type="RefSeq" id="XP_006509237.1">
    <property type="nucleotide sequence ID" value="XM_006509174.3"/>
</dbReference>
<dbReference type="SMR" id="Q9JM61"/>
<dbReference type="FunCoup" id="Q9JM61">
    <property type="interactions" value="80"/>
</dbReference>
<dbReference type="STRING" id="10090.ENSMUSP00000067701"/>
<dbReference type="GlyCosmos" id="Q9JM61">
    <property type="glycosylation" value="6 sites, No reported glycans"/>
</dbReference>
<dbReference type="GlyGen" id="Q9JM61">
    <property type="glycosylation" value="6 sites, 2 N-linked glycans (2 sites)"/>
</dbReference>
<dbReference type="iPTMnet" id="Q9JM61"/>
<dbReference type="PhosphoSitePlus" id="Q9JM61"/>
<dbReference type="PaxDb" id="10090-ENSMUSP00000067701"/>
<dbReference type="ProteomicsDB" id="262981"/>
<dbReference type="GeneID" id="56229"/>
<dbReference type="KEGG" id="mmu:56229"/>
<dbReference type="UCSC" id="uc009lcv.2">
    <property type="organism name" value="mouse"/>
</dbReference>
<dbReference type="AGR" id="MGI:1929096"/>
<dbReference type="CTD" id="55901"/>
<dbReference type="MGI" id="MGI:1929096">
    <property type="gene designation" value="Thsd1"/>
</dbReference>
<dbReference type="eggNOG" id="ENOG502QY3P">
    <property type="taxonomic scope" value="Eukaryota"/>
</dbReference>
<dbReference type="InParanoid" id="Q9JM61"/>
<dbReference type="OrthoDB" id="16692at2759"/>
<dbReference type="PhylomeDB" id="Q9JM61"/>
<dbReference type="TreeFam" id="TF333148"/>
<dbReference type="Reactome" id="R-MMU-5173214">
    <property type="pathway name" value="O-glycosylation of TSR domain-containing proteins"/>
</dbReference>
<dbReference type="BioGRID-ORCS" id="56229">
    <property type="hits" value="5 hits in 76 CRISPR screens"/>
</dbReference>
<dbReference type="PRO" id="PR:Q9JM61"/>
<dbReference type="Proteomes" id="UP000000589">
    <property type="component" value="Unplaced"/>
</dbReference>
<dbReference type="RNAct" id="Q9JM61">
    <property type="molecule type" value="protein"/>
</dbReference>
<dbReference type="GO" id="GO:0071944">
    <property type="term" value="C:cell periphery"/>
    <property type="evidence" value="ECO:0000314"/>
    <property type="project" value="MGI"/>
</dbReference>
<dbReference type="GO" id="GO:0009986">
    <property type="term" value="C:cell surface"/>
    <property type="evidence" value="ECO:0000314"/>
    <property type="project" value="MGI"/>
</dbReference>
<dbReference type="GO" id="GO:0005737">
    <property type="term" value="C:cytoplasm"/>
    <property type="evidence" value="ECO:0000314"/>
    <property type="project" value="MGI"/>
</dbReference>
<dbReference type="GO" id="GO:0005768">
    <property type="term" value="C:endosome"/>
    <property type="evidence" value="ECO:0000250"/>
    <property type="project" value="UniProtKB"/>
</dbReference>
<dbReference type="GO" id="GO:0010008">
    <property type="term" value="C:endosome membrane"/>
    <property type="evidence" value="ECO:0007669"/>
    <property type="project" value="UniProtKB-SubCell"/>
</dbReference>
<dbReference type="GO" id="GO:0005925">
    <property type="term" value="C:focal adhesion"/>
    <property type="evidence" value="ECO:0000250"/>
    <property type="project" value="UniProtKB"/>
</dbReference>
<dbReference type="GO" id="GO:0050840">
    <property type="term" value="F:extracellular matrix binding"/>
    <property type="evidence" value="ECO:0000250"/>
    <property type="project" value="UniProtKB"/>
</dbReference>
<dbReference type="GO" id="GO:0048041">
    <property type="term" value="P:focal adhesion assembly"/>
    <property type="evidence" value="ECO:0000250"/>
    <property type="project" value="UniProtKB"/>
</dbReference>
<dbReference type="GO" id="GO:0002244">
    <property type="term" value="P:hematopoietic progenitor cell differentiation"/>
    <property type="evidence" value="ECO:0000316"/>
    <property type="project" value="MGI"/>
</dbReference>
<dbReference type="FunFam" id="2.20.100.10:FF:000115">
    <property type="entry name" value="Thrombospondin type-1 domain-containing protein 1"/>
    <property type="match status" value="1"/>
</dbReference>
<dbReference type="Gene3D" id="2.20.100.10">
    <property type="entry name" value="Thrombospondin type-1 (TSP1) repeat"/>
    <property type="match status" value="1"/>
</dbReference>
<dbReference type="InterPro" id="IPR038877">
    <property type="entry name" value="THSD1"/>
</dbReference>
<dbReference type="InterPro" id="IPR056218">
    <property type="entry name" value="THSD1_D2"/>
</dbReference>
<dbReference type="InterPro" id="IPR056219">
    <property type="entry name" value="THSD1_D3"/>
</dbReference>
<dbReference type="InterPro" id="IPR056217">
    <property type="entry name" value="THSD1_N"/>
</dbReference>
<dbReference type="InterPro" id="IPR000884">
    <property type="entry name" value="TSP1_rpt"/>
</dbReference>
<dbReference type="InterPro" id="IPR036383">
    <property type="entry name" value="TSP1_rpt_sf"/>
</dbReference>
<dbReference type="PANTHER" id="PTHR16311">
    <property type="entry name" value="THROMBOSPONDIN TYPE I DOMAIN-CONTAINING 1"/>
    <property type="match status" value="1"/>
</dbReference>
<dbReference type="PANTHER" id="PTHR16311:SF3">
    <property type="entry name" value="THROMBOSPONDIN TYPE-1 DOMAIN-CONTAINING PROTEIN 1"/>
    <property type="match status" value="1"/>
</dbReference>
<dbReference type="Pfam" id="PF24310">
    <property type="entry name" value="THSD1_D2"/>
    <property type="match status" value="1"/>
</dbReference>
<dbReference type="Pfam" id="PF24311">
    <property type="entry name" value="THSD1_D3"/>
    <property type="match status" value="1"/>
</dbReference>
<dbReference type="Pfam" id="PF24306">
    <property type="entry name" value="THSD1_N"/>
    <property type="match status" value="1"/>
</dbReference>
<dbReference type="Pfam" id="PF00090">
    <property type="entry name" value="TSP_1"/>
    <property type="match status" value="1"/>
</dbReference>
<dbReference type="SMART" id="SM00209">
    <property type="entry name" value="TSP1"/>
    <property type="match status" value="1"/>
</dbReference>
<dbReference type="SUPFAM" id="SSF82895">
    <property type="entry name" value="TSP-1 type 1 repeat"/>
    <property type="match status" value="1"/>
</dbReference>
<dbReference type="PROSITE" id="PS50092">
    <property type="entry name" value="TSP1"/>
    <property type="match status" value="1"/>
</dbReference>
<name>THSD1_MOUSE</name>
<keyword id="KW-0965">Cell junction</keyword>
<keyword id="KW-1015">Disulfide bond</keyword>
<keyword id="KW-0967">Endosome</keyword>
<keyword id="KW-0325">Glycoprotein</keyword>
<keyword id="KW-0472">Membrane</keyword>
<keyword id="KW-0597">Phosphoprotein</keyword>
<keyword id="KW-1185">Reference proteome</keyword>
<keyword id="KW-0732">Signal</keyword>
<keyword id="KW-0812">Transmembrane</keyword>
<keyword id="KW-1133">Transmembrane helix</keyword>
<organism>
    <name type="scientific">Mus musculus</name>
    <name type="common">Mouse</name>
    <dbReference type="NCBI Taxonomy" id="10090"/>
    <lineage>
        <taxon>Eukaryota</taxon>
        <taxon>Metazoa</taxon>
        <taxon>Chordata</taxon>
        <taxon>Craniata</taxon>
        <taxon>Vertebrata</taxon>
        <taxon>Euteleostomi</taxon>
        <taxon>Mammalia</taxon>
        <taxon>Eutheria</taxon>
        <taxon>Euarchontoglires</taxon>
        <taxon>Glires</taxon>
        <taxon>Rodentia</taxon>
        <taxon>Myomorpha</taxon>
        <taxon>Muroidea</taxon>
        <taxon>Muridae</taxon>
        <taxon>Murinae</taxon>
        <taxon>Mus</taxon>
        <taxon>Mus</taxon>
    </lineage>
</organism>
<sequence>MKPMLKDFSNLLLVVLCDYVLGEAEYLLLQEPVHVALSDRTVSVGFHYLSDVNGTLRNVSVMLWEANTNRTLTTKYLLTNQAQGTLQFECFYFKEAGDYWFVMIPEVTDNGTQVPLWEKSAFLKVEWPVFHIDLNRTAKAAEGTFQVGVFTTQPLCLFPVDKPDMLVDVIFTDRLPEARASLGQPLEIRASKRTKLTQGQWVEFGCAPVGVEAYVTVMLRLLGQDSVIASTGPIDLAQKFGYKLMMAPEVTCESVLEVMVLPPPCVFVQGVLAVYKEAPKRPEERTFQVAENRLPLGERRTVFNCTLFDVGKNKYCFNFGIVKKGHFSAKECMLIQRNIETWGPWQPWSPCSTTCGDAVRERRRLCVTSFPSRPSCSGMSSETSPCSLEECAVFRPPGPSPVSPQDPVKSNNVVTVTGISLCLFIIFATVLITLWRRFGRAPKCSTPVRHNSIHSPGFRKNSDEENICELSEPRGSFSDAGDGPRGSPGDTGIPLTYRCSASAPPEDEASGSESFQSNAQKIIPPLFSYRLAQQQLKEMKKKGLTETTKVYHVSQSPLTDTVVDATASPPLDLECPEEAAASKFRIKSPFLDQPGAGTGERPPSRLDGIVPPPGCAVSPSQTLIQKSQIRSTGGRDGSSERCHSRSSLFRRTASFHETKQSRPFRERSLSALTPRQVPAYSSRMRTWDQMEDRCRPPSRSTHLLPERPEHFQGAGRTSSPLGPLSKSYTVGHPRRKPDPGDRQAGLVAGAEKMEPHRAHRGPSPSHRSASRKQSSPIFLKDSYQKVSQLSPSHFRKDKCQSFPIHPEFAFYDNTSFRLTEAEQRMLDLPGYFGSNEEDETTSTLSVEKLVI</sequence>
<protein>
    <recommendedName>
        <fullName>Thrombospondin type-1 domain-containing protein 1</fullName>
    </recommendedName>
    <alternativeName>
        <fullName>Transmembrane molecule with thrombospondin module</fullName>
    </alternativeName>
</protein>
<reference key="1">
    <citation type="submission" date="2000-03" db="EMBL/GenBank/DDBJ databases">
        <title>Transmembrane molecule with thrombospondin module.</title>
        <authorList>
            <person name="Hiroyama T."/>
            <person name="Iwama A."/>
            <person name="Nakamura Y."/>
            <person name="Nakauchi H."/>
        </authorList>
    </citation>
    <scope>NUCLEOTIDE SEQUENCE [MRNA]</scope>
</reference>
<reference key="2">
    <citation type="journal article" date="2005" name="Science">
        <title>The transcriptional landscape of the mammalian genome.</title>
        <authorList>
            <person name="Carninci P."/>
            <person name="Kasukawa T."/>
            <person name="Katayama S."/>
            <person name="Gough J."/>
            <person name="Frith M.C."/>
            <person name="Maeda N."/>
            <person name="Oyama R."/>
            <person name="Ravasi T."/>
            <person name="Lenhard B."/>
            <person name="Wells C."/>
            <person name="Kodzius R."/>
            <person name="Shimokawa K."/>
            <person name="Bajic V.B."/>
            <person name="Brenner S.E."/>
            <person name="Batalov S."/>
            <person name="Forrest A.R."/>
            <person name="Zavolan M."/>
            <person name="Davis M.J."/>
            <person name="Wilming L.G."/>
            <person name="Aidinis V."/>
            <person name="Allen J.E."/>
            <person name="Ambesi-Impiombato A."/>
            <person name="Apweiler R."/>
            <person name="Aturaliya R.N."/>
            <person name="Bailey T.L."/>
            <person name="Bansal M."/>
            <person name="Baxter L."/>
            <person name="Beisel K.W."/>
            <person name="Bersano T."/>
            <person name="Bono H."/>
            <person name="Chalk A.M."/>
            <person name="Chiu K.P."/>
            <person name="Choudhary V."/>
            <person name="Christoffels A."/>
            <person name="Clutterbuck D.R."/>
            <person name="Crowe M.L."/>
            <person name="Dalla E."/>
            <person name="Dalrymple B.P."/>
            <person name="de Bono B."/>
            <person name="Della Gatta G."/>
            <person name="di Bernardo D."/>
            <person name="Down T."/>
            <person name="Engstrom P."/>
            <person name="Fagiolini M."/>
            <person name="Faulkner G."/>
            <person name="Fletcher C.F."/>
            <person name="Fukushima T."/>
            <person name="Furuno M."/>
            <person name="Futaki S."/>
            <person name="Gariboldi M."/>
            <person name="Georgii-Hemming P."/>
            <person name="Gingeras T.R."/>
            <person name="Gojobori T."/>
            <person name="Green R.E."/>
            <person name="Gustincich S."/>
            <person name="Harbers M."/>
            <person name="Hayashi Y."/>
            <person name="Hensch T.K."/>
            <person name="Hirokawa N."/>
            <person name="Hill D."/>
            <person name="Huminiecki L."/>
            <person name="Iacono M."/>
            <person name="Ikeo K."/>
            <person name="Iwama A."/>
            <person name="Ishikawa T."/>
            <person name="Jakt M."/>
            <person name="Kanapin A."/>
            <person name="Katoh M."/>
            <person name="Kawasawa Y."/>
            <person name="Kelso J."/>
            <person name="Kitamura H."/>
            <person name="Kitano H."/>
            <person name="Kollias G."/>
            <person name="Krishnan S.P."/>
            <person name="Kruger A."/>
            <person name="Kummerfeld S.K."/>
            <person name="Kurochkin I.V."/>
            <person name="Lareau L.F."/>
            <person name="Lazarevic D."/>
            <person name="Lipovich L."/>
            <person name="Liu J."/>
            <person name="Liuni S."/>
            <person name="McWilliam S."/>
            <person name="Madan Babu M."/>
            <person name="Madera M."/>
            <person name="Marchionni L."/>
            <person name="Matsuda H."/>
            <person name="Matsuzawa S."/>
            <person name="Miki H."/>
            <person name="Mignone F."/>
            <person name="Miyake S."/>
            <person name="Morris K."/>
            <person name="Mottagui-Tabar S."/>
            <person name="Mulder N."/>
            <person name="Nakano N."/>
            <person name="Nakauchi H."/>
            <person name="Ng P."/>
            <person name="Nilsson R."/>
            <person name="Nishiguchi S."/>
            <person name="Nishikawa S."/>
            <person name="Nori F."/>
            <person name="Ohara O."/>
            <person name="Okazaki Y."/>
            <person name="Orlando V."/>
            <person name="Pang K.C."/>
            <person name="Pavan W.J."/>
            <person name="Pavesi G."/>
            <person name="Pesole G."/>
            <person name="Petrovsky N."/>
            <person name="Piazza S."/>
            <person name="Reed J."/>
            <person name="Reid J.F."/>
            <person name="Ring B.Z."/>
            <person name="Ringwald M."/>
            <person name="Rost B."/>
            <person name="Ruan Y."/>
            <person name="Salzberg S.L."/>
            <person name="Sandelin A."/>
            <person name="Schneider C."/>
            <person name="Schoenbach C."/>
            <person name="Sekiguchi K."/>
            <person name="Semple C.A."/>
            <person name="Seno S."/>
            <person name="Sessa L."/>
            <person name="Sheng Y."/>
            <person name="Shibata Y."/>
            <person name="Shimada H."/>
            <person name="Shimada K."/>
            <person name="Silva D."/>
            <person name="Sinclair B."/>
            <person name="Sperling S."/>
            <person name="Stupka E."/>
            <person name="Sugiura K."/>
            <person name="Sultana R."/>
            <person name="Takenaka Y."/>
            <person name="Taki K."/>
            <person name="Tammoja K."/>
            <person name="Tan S.L."/>
            <person name="Tang S."/>
            <person name="Taylor M.S."/>
            <person name="Tegner J."/>
            <person name="Teichmann S.A."/>
            <person name="Ueda H.R."/>
            <person name="van Nimwegen E."/>
            <person name="Verardo R."/>
            <person name="Wei C.L."/>
            <person name="Yagi K."/>
            <person name="Yamanishi H."/>
            <person name="Zabarovsky E."/>
            <person name="Zhu S."/>
            <person name="Zimmer A."/>
            <person name="Hide W."/>
            <person name="Bult C."/>
            <person name="Grimmond S.M."/>
            <person name="Teasdale R.D."/>
            <person name="Liu E.T."/>
            <person name="Brusic V."/>
            <person name="Quackenbush J."/>
            <person name="Wahlestedt C."/>
            <person name="Mattick J.S."/>
            <person name="Hume D.A."/>
            <person name="Kai C."/>
            <person name="Sasaki D."/>
            <person name="Tomaru Y."/>
            <person name="Fukuda S."/>
            <person name="Kanamori-Katayama M."/>
            <person name="Suzuki M."/>
            <person name="Aoki J."/>
            <person name="Arakawa T."/>
            <person name="Iida J."/>
            <person name="Imamura K."/>
            <person name="Itoh M."/>
            <person name="Kato T."/>
            <person name="Kawaji H."/>
            <person name="Kawagashira N."/>
            <person name="Kawashima T."/>
            <person name="Kojima M."/>
            <person name="Kondo S."/>
            <person name="Konno H."/>
            <person name="Nakano K."/>
            <person name="Ninomiya N."/>
            <person name="Nishio T."/>
            <person name="Okada M."/>
            <person name="Plessy C."/>
            <person name="Shibata K."/>
            <person name="Shiraki T."/>
            <person name="Suzuki S."/>
            <person name="Tagami M."/>
            <person name="Waki K."/>
            <person name="Watahiki A."/>
            <person name="Okamura-Oho Y."/>
            <person name="Suzuki H."/>
            <person name="Kawai J."/>
            <person name="Hayashizaki Y."/>
        </authorList>
    </citation>
    <scope>NUCLEOTIDE SEQUENCE [LARGE SCALE MRNA]</scope>
    <source>
        <strain>C57BL/6J</strain>
        <tissue>Spinal cord</tissue>
    </source>
</reference>
<reference key="3">
    <citation type="journal article" date="2004" name="Genome Res.">
        <title>The status, quality, and expansion of the NIH full-length cDNA project: the Mammalian Gene Collection (MGC).</title>
        <authorList>
            <consortium name="The MGC Project Team"/>
        </authorList>
    </citation>
    <scope>NUCLEOTIDE SEQUENCE [LARGE SCALE MRNA]</scope>
</reference>
<reference key="4">
    <citation type="journal article" date="2010" name="Cell">
        <title>A tissue-specific atlas of mouse protein phosphorylation and expression.</title>
        <authorList>
            <person name="Huttlin E.L."/>
            <person name="Jedrychowski M.P."/>
            <person name="Elias J.E."/>
            <person name="Goswami T."/>
            <person name="Rad R."/>
            <person name="Beausoleil S.A."/>
            <person name="Villen J."/>
            <person name="Haas W."/>
            <person name="Sowa M.E."/>
            <person name="Gygi S.P."/>
        </authorList>
    </citation>
    <scope>PHOSPHORYLATION [LARGE SCALE ANALYSIS] AT SER-462</scope>
    <scope>IDENTIFICATION BY MASS SPECTROMETRY [LARGE SCALE ANALYSIS]</scope>
    <source>
        <tissue>Lung</tissue>
    </source>
</reference>
<reference key="5">
    <citation type="journal article" date="2016" name="Stroke">
        <title>THSD1 (thrombospondin type 1 domain containing protein 1) mutation in the pathogenesis of intracranial aneurysm and subarachnoid emorrhage.</title>
        <authorList>
            <person name="Santiago-Sim T."/>
            <person name="Fang X."/>
            <person name="Hennessy M.L."/>
            <person name="Nalbach S.V."/>
            <person name="DePalma S.R."/>
            <person name="Lee M.S."/>
            <person name="Greenway S.C."/>
            <person name="McDonough B."/>
            <person name="Hergenroeder G.W."/>
            <person name="Patek K.J."/>
            <person name="Colosimo S.M."/>
            <person name="Qualmann K.J."/>
            <person name="Hagan J.P."/>
            <person name="Milewicz D.M."/>
            <person name="MacRae C.A."/>
            <person name="Dymecki S.M."/>
            <person name="Seidman C.E."/>
            <person name="Seidman J.G."/>
            <person name="Kim D.H."/>
        </authorList>
    </citation>
    <scope>DISRUPTION PHENOTYPE</scope>
    <scope>TISSUE SPECIFICITY</scope>
</reference>
<reference key="6">
    <citation type="journal article" date="2016" name="Stroke">
        <title>THSD1 (thrombospondin type 1 domain containing protein 1) mutation in the pathogenesis of intracranial aneurysm and subarachnoid emorrhage.</title>
        <authorList>
            <person name="Santiago-Sim T."/>
            <person name="Fang X."/>
            <person name="Hennessy M.L."/>
            <person name="Nalbach S.V."/>
            <person name="DePalma S.R."/>
            <person name="Lee M.S."/>
            <person name="Greenway S.C."/>
            <person name="McDonough B."/>
            <person name="Hergenroeder G.W."/>
            <person name="Patek K.J."/>
            <person name="Colosimo S.M."/>
            <person name="Qualmann K.J."/>
            <person name="Hagan J.P."/>
            <person name="Milewicz D.M."/>
            <person name="MacRae C.A."/>
            <person name="Dymecki S.M."/>
            <person name="Seidman C.E."/>
            <person name="Seidman J.G."/>
            <person name="Kim D.H."/>
        </authorList>
    </citation>
    <scope>ERRATUM OF PUBMED:27895300</scope>
</reference>